<organism>
    <name type="scientific">Salmonella typhi</name>
    <dbReference type="NCBI Taxonomy" id="90370"/>
    <lineage>
        <taxon>Bacteria</taxon>
        <taxon>Pseudomonadati</taxon>
        <taxon>Pseudomonadota</taxon>
        <taxon>Gammaproteobacteria</taxon>
        <taxon>Enterobacterales</taxon>
        <taxon>Enterobacteriaceae</taxon>
        <taxon>Salmonella</taxon>
    </lineage>
</organism>
<proteinExistence type="evidence at protein level"/>
<sequence length="122" mass="13705">MTSTVEFINRWQRIALLSQSLLELAQRGEWDLLLQQEVSYLQSIETVMEKQTPPGITRSIQDMVAGYIKQTLDNEQLLKGLLQQRLDELSSLIGQSTRQKSLNNAYGRLSGMLLVPDAPGAS</sequence>
<keyword id="KW-0002">3D-structure</keyword>
<keyword id="KW-1005">Bacterial flagellum biogenesis</keyword>
<keyword id="KW-0143">Chaperone</keyword>
<keyword id="KW-0963">Cytoplasm</keyword>
<keyword id="KW-0678">Repressor</keyword>
<keyword id="KW-0804">Transcription</keyword>
<keyword id="KW-0805">Transcription regulation</keyword>
<dbReference type="EMBL" id="AL513382">
    <property type="protein sequence ID" value="CAD05710.1"/>
    <property type="molecule type" value="Genomic_DNA"/>
</dbReference>
<dbReference type="EMBL" id="AE014613">
    <property type="protein sequence ID" value="AAO68593.1"/>
    <property type="molecule type" value="Genomic_DNA"/>
</dbReference>
<dbReference type="RefSeq" id="NP_456523.1">
    <property type="nucleotide sequence ID" value="NC_003198.1"/>
</dbReference>
<dbReference type="RefSeq" id="WP_000204899.1">
    <property type="nucleotide sequence ID" value="NZ_WSUR01000004.1"/>
</dbReference>
<dbReference type="PDB" id="6CH2">
    <property type="method" value="X-ray"/>
    <property type="resolution" value="2.70 A"/>
    <property type="chains" value="D/E/F=1-122"/>
</dbReference>
<dbReference type="PDBsum" id="6CH2"/>
<dbReference type="SMR" id="P0A1N3"/>
<dbReference type="STRING" id="220341.gene:17586078"/>
<dbReference type="KEGG" id="stt:t0915"/>
<dbReference type="KEGG" id="sty:STY2170"/>
<dbReference type="PATRIC" id="fig|220341.7.peg.2183"/>
<dbReference type="eggNOG" id="ENOG5032XUH">
    <property type="taxonomic scope" value="Bacteria"/>
</dbReference>
<dbReference type="HOGENOM" id="CLU_155793_1_0_6"/>
<dbReference type="OMA" id="DMEITYL"/>
<dbReference type="OrthoDB" id="6494117at2"/>
<dbReference type="Proteomes" id="UP000000541">
    <property type="component" value="Chromosome"/>
</dbReference>
<dbReference type="Proteomes" id="UP000002670">
    <property type="component" value="Chromosome"/>
</dbReference>
<dbReference type="GO" id="GO:0005829">
    <property type="term" value="C:cytosol"/>
    <property type="evidence" value="ECO:0007669"/>
    <property type="project" value="UniProtKB-SubCell"/>
</dbReference>
<dbReference type="GO" id="GO:0044781">
    <property type="term" value="P:bacterial-type flagellum organization"/>
    <property type="evidence" value="ECO:0007669"/>
    <property type="project" value="UniProtKB-KW"/>
</dbReference>
<dbReference type="GO" id="GO:1902209">
    <property type="term" value="P:negative regulation of bacterial-type flagellum assembly"/>
    <property type="evidence" value="ECO:0007669"/>
    <property type="project" value="UniProtKB-UniRule"/>
</dbReference>
<dbReference type="GO" id="GO:0006457">
    <property type="term" value="P:protein folding"/>
    <property type="evidence" value="ECO:0007669"/>
    <property type="project" value="UniProtKB-UniRule"/>
</dbReference>
<dbReference type="FunFam" id="1.20.58.380:FF:000002">
    <property type="entry name" value="Flagellar protein FliT"/>
    <property type="match status" value="1"/>
</dbReference>
<dbReference type="Gene3D" id="1.20.58.380">
    <property type="entry name" value="Flagellar protein flit"/>
    <property type="match status" value="1"/>
</dbReference>
<dbReference type="HAMAP" id="MF_01180">
    <property type="entry name" value="FliT"/>
    <property type="match status" value="1"/>
</dbReference>
<dbReference type="InterPro" id="IPR008622">
    <property type="entry name" value="FliT"/>
</dbReference>
<dbReference type="NCBIfam" id="NF007836">
    <property type="entry name" value="PRK10548.1"/>
    <property type="match status" value="1"/>
</dbReference>
<dbReference type="Pfam" id="PF05400">
    <property type="entry name" value="FliT"/>
    <property type="match status" value="1"/>
</dbReference>
<gene>
    <name evidence="1" type="primary">fliT</name>
    <name type="ordered locus">STY2170</name>
    <name type="ordered locus">t0915</name>
</gene>
<name>FLIT_SALTI</name>
<evidence type="ECO:0000255" key="1">
    <source>
        <dbReference type="HAMAP-Rule" id="MF_01180"/>
    </source>
</evidence>
<evidence type="ECO:0007829" key="2">
    <source>
        <dbReference type="PDB" id="6CH2"/>
    </source>
</evidence>
<feature type="chain" id="PRO_0000180976" description="Flagellar protein FliT">
    <location>
        <begin position="1"/>
        <end position="122"/>
    </location>
</feature>
<feature type="region of interest" description="Required for homodimerization" evidence="1">
    <location>
        <begin position="1"/>
        <end position="50"/>
    </location>
</feature>
<feature type="region of interest" description="FliD binding" evidence="1">
    <location>
        <begin position="60"/>
        <end position="98"/>
    </location>
</feature>
<feature type="helix" evidence="2">
    <location>
        <begin position="5"/>
        <end position="26"/>
    </location>
</feature>
<feature type="helix" evidence="2">
    <location>
        <begin position="30"/>
        <end position="49"/>
    </location>
</feature>
<feature type="helix" evidence="2">
    <location>
        <begin position="58"/>
        <end position="106"/>
    </location>
</feature>
<reference key="1">
    <citation type="journal article" date="2001" name="Nature">
        <title>Complete genome sequence of a multiple drug resistant Salmonella enterica serovar Typhi CT18.</title>
        <authorList>
            <person name="Parkhill J."/>
            <person name="Dougan G."/>
            <person name="James K.D."/>
            <person name="Thomson N.R."/>
            <person name="Pickard D."/>
            <person name="Wain J."/>
            <person name="Churcher C.M."/>
            <person name="Mungall K.L."/>
            <person name="Bentley S.D."/>
            <person name="Holden M.T.G."/>
            <person name="Sebaihia M."/>
            <person name="Baker S."/>
            <person name="Basham D."/>
            <person name="Brooks K."/>
            <person name="Chillingworth T."/>
            <person name="Connerton P."/>
            <person name="Cronin A."/>
            <person name="Davis P."/>
            <person name="Davies R.M."/>
            <person name="Dowd L."/>
            <person name="White N."/>
            <person name="Farrar J."/>
            <person name="Feltwell T."/>
            <person name="Hamlin N."/>
            <person name="Haque A."/>
            <person name="Hien T.T."/>
            <person name="Holroyd S."/>
            <person name="Jagels K."/>
            <person name="Krogh A."/>
            <person name="Larsen T.S."/>
            <person name="Leather S."/>
            <person name="Moule S."/>
            <person name="O'Gaora P."/>
            <person name="Parry C."/>
            <person name="Quail M.A."/>
            <person name="Rutherford K.M."/>
            <person name="Simmonds M."/>
            <person name="Skelton J."/>
            <person name="Stevens K."/>
            <person name="Whitehead S."/>
            <person name="Barrell B.G."/>
        </authorList>
    </citation>
    <scope>NUCLEOTIDE SEQUENCE [LARGE SCALE GENOMIC DNA]</scope>
    <source>
        <strain>CT18</strain>
    </source>
</reference>
<reference key="2">
    <citation type="journal article" date="2003" name="J. Bacteriol.">
        <title>Comparative genomics of Salmonella enterica serovar Typhi strains Ty2 and CT18.</title>
        <authorList>
            <person name="Deng W."/>
            <person name="Liou S.-R."/>
            <person name="Plunkett G. III"/>
            <person name="Mayhew G.F."/>
            <person name="Rose D.J."/>
            <person name="Burland V."/>
            <person name="Kodoyianni V."/>
            <person name="Schwartz D.C."/>
            <person name="Blattner F.R."/>
        </authorList>
    </citation>
    <scope>NUCLEOTIDE SEQUENCE [LARGE SCALE GENOMIC DNA]</scope>
    <source>
        <strain>ATCC 700931 / Ty2</strain>
    </source>
</reference>
<protein>
    <recommendedName>
        <fullName evidence="1">Flagellar protein FliT</fullName>
    </recommendedName>
</protein>
<comment type="function">
    <text evidence="1">Dual-function protein that regulates the transcription of class 2 flagellar operons and that also acts as an export chaperone for the filament-capping protein FliD. As a transcriptional regulator, acts as an anti-FlhDC factor; it directly binds FlhC, thus inhibiting the binding of the FlhC/FlhD complex to class 2 promoters, resulting in decreased expression of class 2 flagellar operons. As a chaperone, effects FliD transition to the membrane by preventing its premature polymerization, and by directing it to the export apparatus.</text>
</comment>
<comment type="subunit">
    <text evidence="1">Homodimer. Interacts with FliD and FlhC.</text>
</comment>
<comment type="subcellular location">
    <subcellularLocation>
        <location evidence="1">Cytoplasm</location>
        <location evidence="1">Cytosol</location>
    </subcellularLocation>
</comment>
<comment type="similarity">
    <text evidence="1">Belongs to the FliT family.</text>
</comment>
<accession>P0A1N3</accession>
<accession>P26611</accession>